<reference key="1">
    <citation type="journal article" date="2009" name="BMC Genomics">
        <title>Comprehensive EST analysis of the symbiotic sea anemone, Anemonia viridis.</title>
        <authorList>
            <person name="Sabourault C."/>
            <person name="Ganot P."/>
            <person name="Deleury E."/>
            <person name="Allemand D."/>
            <person name="Furla P."/>
        </authorList>
    </citation>
    <scope>NUCLEOTIDE SEQUENCE [MRNA]</scope>
</reference>
<reference key="2">
    <citation type="journal article" date="2011" name="BMC Genomics">
        <title>The mining of toxin-like polypeptides from EST database by single residue distribution analysis.</title>
        <authorList>
            <person name="Kozlov S."/>
            <person name="Grishin E."/>
        </authorList>
    </citation>
    <scope>NOMENCLATURE</scope>
</reference>
<reference key="3">
    <citation type="journal article" date="2012" name="Toxicon">
        <title>Development of a rational nomenclature for naming peptide and protein toxins from sea anemones.</title>
        <authorList>
            <person name="Oliveira J.S."/>
            <person name="Fuentes-Silva D."/>
            <person name="King G.F."/>
        </authorList>
    </citation>
    <scope>NOMENCLATURE</scope>
</reference>
<reference key="4">
    <citation type="journal article" date="2013" name="Mar. Drugs">
        <title>Evidence of accelerated evolution and ectodermal-specific expression of presumptive BDS toxin cDNAs from Anemonia viridis.</title>
        <authorList>
            <person name="Nicosia A."/>
            <person name="Maggio T."/>
            <person name="Mazzola S."/>
            <person name="Cuttitta A."/>
        </authorList>
    </citation>
    <scope>3D-STRUCTURE MODELING</scope>
    <scope>TISSUE SPECIFICITY</scope>
</reference>
<evidence type="ECO:0000250" key="1">
    <source>
        <dbReference type="UniProtKB" id="P11494"/>
    </source>
</evidence>
<evidence type="ECO:0000255" key="2"/>
<evidence type="ECO:0000269" key="3">
    <source>
    </source>
</evidence>
<evidence type="ECO:0000303" key="4">
    <source>
    </source>
</evidence>
<evidence type="ECO:0000303" key="5">
    <source>
    </source>
</evidence>
<evidence type="ECO:0000305" key="6"/>
<feature type="signal peptide" evidence="2">
    <location>
        <begin position="1"/>
        <end position="19"/>
    </location>
</feature>
<feature type="propeptide" id="PRO_0000433670" evidence="1">
    <location>
        <begin position="20"/>
        <end position="31"/>
    </location>
</feature>
<feature type="chain" id="PRO_0000433671" description="Kappa-actitoxin-Avd4m">
    <location>
        <begin position="34"/>
        <end position="76"/>
    </location>
</feature>
<feature type="disulfide bond" evidence="1">
    <location>
        <begin position="37"/>
        <end position="72"/>
    </location>
</feature>
<feature type="disulfide bond" evidence="1">
    <location>
        <begin position="39"/>
        <end position="65"/>
    </location>
</feature>
<feature type="disulfide bond" evidence="1">
    <location>
        <begin position="55"/>
        <end position="73"/>
    </location>
</feature>
<sequence length="76" mass="8395">MNKALFLCLVVLCAAVVFAAEDLQKAKHAPFKRATACFCPGKADRGDLWILRGDCPDGYGYTTYCYKGPNICCYPH</sequence>
<organism>
    <name type="scientific">Anemonia viridis</name>
    <name type="common">Snakelocks anemone</name>
    <dbReference type="NCBI Taxonomy" id="51769"/>
    <lineage>
        <taxon>Eukaryota</taxon>
        <taxon>Metazoa</taxon>
        <taxon>Cnidaria</taxon>
        <taxon>Anthozoa</taxon>
        <taxon>Hexacorallia</taxon>
        <taxon>Actiniaria</taxon>
        <taxon>Actiniidae</taxon>
        <taxon>Anemonia</taxon>
    </lineage>
</organism>
<keyword id="KW-0165">Cleavage on pair of basic residues</keyword>
<keyword id="KW-1015">Disulfide bond</keyword>
<keyword id="KW-0382">Hypotensive agent</keyword>
<keyword id="KW-0872">Ion channel impairing toxin</keyword>
<keyword id="KW-0166">Nematocyst</keyword>
<keyword id="KW-0528">Neurotoxin</keyword>
<keyword id="KW-0632">Potassium channel impairing toxin</keyword>
<keyword id="KW-0964">Secreted</keyword>
<keyword id="KW-0732">Signal</keyword>
<keyword id="KW-0800">Toxin</keyword>
<keyword id="KW-1220">Voltage-gated potassium channel impairing toxin</keyword>
<name>BDSD_ANEVI</name>
<proteinExistence type="evidence at transcript level"/>
<protein>
    <recommendedName>
        <fullName evidence="5">Kappa-actitoxin-Avd4m</fullName>
        <shortName evidence="5">Kappa-AITX-Avd4m</shortName>
    </recommendedName>
    <alternativeName>
        <fullName>Antihypertensive protein BDS-13</fullName>
    </alternativeName>
    <alternativeName>
        <fullName evidence="4">Blood depressing substance 13</fullName>
        <shortName evidence="4">BDS-13</shortName>
    </alternativeName>
</protein>
<dbReference type="EMBL" id="FK752236">
    <property type="status" value="NOT_ANNOTATED_CDS"/>
    <property type="molecule type" value="mRNA"/>
</dbReference>
<dbReference type="SMR" id="P0DMY7"/>
<dbReference type="GO" id="GO:0005576">
    <property type="term" value="C:extracellular region"/>
    <property type="evidence" value="ECO:0007669"/>
    <property type="project" value="UniProtKB-SubCell"/>
</dbReference>
<dbReference type="GO" id="GO:0042151">
    <property type="term" value="C:nematocyst"/>
    <property type="evidence" value="ECO:0007669"/>
    <property type="project" value="UniProtKB-SubCell"/>
</dbReference>
<dbReference type="GO" id="GO:0008200">
    <property type="term" value="F:ion channel inhibitor activity"/>
    <property type="evidence" value="ECO:0007669"/>
    <property type="project" value="InterPro"/>
</dbReference>
<dbReference type="GO" id="GO:0015459">
    <property type="term" value="F:potassium channel regulator activity"/>
    <property type="evidence" value="ECO:0007669"/>
    <property type="project" value="UniProtKB-KW"/>
</dbReference>
<dbReference type="GO" id="GO:0090729">
    <property type="term" value="F:toxin activity"/>
    <property type="evidence" value="ECO:0007669"/>
    <property type="project" value="UniProtKB-KW"/>
</dbReference>
<dbReference type="GO" id="GO:0008217">
    <property type="term" value="P:regulation of blood pressure"/>
    <property type="evidence" value="ECO:0007669"/>
    <property type="project" value="UniProtKB-KW"/>
</dbReference>
<dbReference type="Gene3D" id="2.20.20.10">
    <property type="entry name" value="Anthopleurin-A"/>
    <property type="match status" value="1"/>
</dbReference>
<dbReference type="InterPro" id="IPR012414">
    <property type="entry name" value="BDS_K_chnl_tox"/>
</dbReference>
<dbReference type="InterPro" id="IPR023355">
    <property type="entry name" value="Myo_ane_neurotoxin_sf"/>
</dbReference>
<dbReference type="Pfam" id="PF07936">
    <property type="entry name" value="Defensin_4"/>
    <property type="match status" value="1"/>
</dbReference>
<dbReference type="SUPFAM" id="SSF57392">
    <property type="entry name" value="Defensin-like"/>
    <property type="match status" value="1"/>
</dbReference>
<comment type="function">
    <text evidence="1">Blocks Kv3 voltage-gated potassium channels. Reduces blood pressure.</text>
</comment>
<comment type="subcellular location">
    <subcellularLocation>
        <location evidence="6">Secreted</location>
    </subcellularLocation>
    <subcellularLocation>
        <location evidence="6">Nematocyst</location>
    </subcellularLocation>
</comment>
<comment type="tissue specificity">
    <text evidence="3">Weakly expressed in the ectodermal tissue from the distal and proximal tentacles, body wall, and oral disk.</text>
</comment>
<comment type="similarity">
    <text evidence="6">Belongs to the sea anemone type 3 (BDS) potassium channel toxin family.</text>
</comment>
<comment type="caution">
    <text evidence="6">Opinions are divided on whether Anemonia viridis (Forsskal, 1775) and Anemonia sulcata (Pennant, 1777) are separate species.</text>
</comment>
<accession>P0DMY7</accession>